<feature type="chain" id="PRO_1000214644" description="Large ribosomal subunit protein uL5">
    <location>
        <begin position="1"/>
        <end position="179"/>
    </location>
</feature>
<reference key="1">
    <citation type="submission" date="2009-05" db="EMBL/GenBank/DDBJ databases">
        <title>Complete sequence of Tolumonas auensis DSM 9187.</title>
        <authorList>
            <consortium name="US DOE Joint Genome Institute"/>
            <person name="Lucas S."/>
            <person name="Copeland A."/>
            <person name="Lapidus A."/>
            <person name="Glavina del Rio T."/>
            <person name="Tice H."/>
            <person name="Bruce D."/>
            <person name="Goodwin L."/>
            <person name="Pitluck S."/>
            <person name="Chertkov O."/>
            <person name="Brettin T."/>
            <person name="Detter J.C."/>
            <person name="Han C."/>
            <person name="Larimer F."/>
            <person name="Land M."/>
            <person name="Hauser L."/>
            <person name="Kyrpides N."/>
            <person name="Mikhailova N."/>
            <person name="Spring S."/>
            <person name="Beller H."/>
        </authorList>
    </citation>
    <scope>NUCLEOTIDE SEQUENCE [LARGE SCALE GENOMIC DNA]</scope>
    <source>
        <strain>DSM 9187 / NBRC 110442 / TA 4</strain>
    </source>
</reference>
<gene>
    <name evidence="1" type="primary">rplE</name>
    <name type="ordered locus">Tola_0111</name>
</gene>
<sequence>MAKLHDTYRQTVVQELMNQFGYNSVMQVPRIEKITLNMGVGEALADKKVLENAAGDLAAISGQKPLITKARKSVAGFKIREGYPIGCKVTLRGERMWEFLERLICISMPRIRDFRGVSAKSFDGRGNYSMGVREQIIFPEIDYDKVDKVRGLDITITTTAKTDEEGRALLAAFSFPFRK</sequence>
<proteinExistence type="inferred from homology"/>
<evidence type="ECO:0000255" key="1">
    <source>
        <dbReference type="HAMAP-Rule" id="MF_01333"/>
    </source>
</evidence>
<evidence type="ECO:0000305" key="2"/>
<comment type="function">
    <text evidence="1">This is one of the proteins that bind and probably mediate the attachment of the 5S RNA into the large ribosomal subunit, where it forms part of the central protuberance. In the 70S ribosome it contacts protein S13 of the 30S subunit (bridge B1b), connecting the 2 subunits; this bridge is implicated in subunit movement. Contacts the P site tRNA; the 5S rRNA and some of its associated proteins might help stabilize positioning of ribosome-bound tRNAs.</text>
</comment>
<comment type="subunit">
    <text evidence="1">Part of the 50S ribosomal subunit; part of the 5S rRNA/L5/L18/L25 subcomplex. Contacts the 5S rRNA and the P site tRNA. Forms a bridge to the 30S subunit in the 70S ribosome.</text>
</comment>
<comment type="similarity">
    <text evidence="1">Belongs to the universal ribosomal protein uL5 family.</text>
</comment>
<keyword id="KW-1185">Reference proteome</keyword>
<keyword id="KW-0687">Ribonucleoprotein</keyword>
<keyword id="KW-0689">Ribosomal protein</keyword>
<keyword id="KW-0694">RNA-binding</keyword>
<keyword id="KW-0699">rRNA-binding</keyword>
<keyword id="KW-0820">tRNA-binding</keyword>
<accession>C4L7U2</accession>
<protein>
    <recommendedName>
        <fullName evidence="1">Large ribosomal subunit protein uL5</fullName>
    </recommendedName>
    <alternativeName>
        <fullName evidence="2">50S ribosomal protein L5</fullName>
    </alternativeName>
</protein>
<organism>
    <name type="scientific">Tolumonas auensis (strain DSM 9187 / NBRC 110442 / TA 4)</name>
    <dbReference type="NCBI Taxonomy" id="595494"/>
    <lineage>
        <taxon>Bacteria</taxon>
        <taxon>Pseudomonadati</taxon>
        <taxon>Pseudomonadota</taxon>
        <taxon>Gammaproteobacteria</taxon>
        <taxon>Aeromonadales</taxon>
        <taxon>Aeromonadaceae</taxon>
        <taxon>Tolumonas</taxon>
    </lineage>
</organism>
<name>RL5_TOLAT</name>
<dbReference type="EMBL" id="CP001616">
    <property type="protein sequence ID" value="ACQ91741.1"/>
    <property type="molecule type" value="Genomic_DNA"/>
</dbReference>
<dbReference type="RefSeq" id="WP_012728340.1">
    <property type="nucleotide sequence ID" value="NC_012691.1"/>
</dbReference>
<dbReference type="SMR" id="C4L7U2"/>
<dbReference type="STRING" id="595494.Tola_0111"/>
<dbReference type="KEGG" id="tau:Tola_0111"/>
<dbReference type="eggNOG" id="COG0094">
    <property type="taxonomic scope" value="Bacteria"/>
</dbReference>
<dbReference type="HOGENOM" id="CLU_061015_2_1_6"/>
<dbReference type="OrthoDB" id="9806626at2"/>
<dbReference type="Proteomes" id="UP000009073">
    <property type="component" value="Chromosome"/>
</dbReference>
<dbReference type="GO" id="GO:1990904">
    <property type="term" value="C:ribonucleoprotein complex"/>
    <property type="evidence" value="ECO:0007669"/>
    <property type="project" value="UniProtKB-KW"/>
</dbReference>
<dbReference type="GO" id="GO:0005840">
    <property type="term" value="C:ribosome"/>
    <property type="evidence" value="ECO:0007669"/>
    <property type="project" value="UniProtKB-KW"/>
</dbReference>
<dbReference type="GO" id="GO:0019843">
    <property type="term" value="F:rRNA binding"/>
    <property type="evidence" value="ECO:0007669"/>
    <property type="project" value="UniProtKB-UniRule"/>
</dbReference>
<dbReference type="GO" id="GO:0003735">
    <property type="term" value="F:structural constituent of ribosome"/>
    <property type="evidence" value="ECO:0007669"/>
    <property type="project" value="InterPro"/>
</dbReference>
<dbReference type="GO" id="GO:0000049">
    <property type="term" value="F:tRNA binding"/>
    <property type="evidence" value="ECO:0007669"/>
    <property type="project" value="UniProtKB-UniRule"/>
</dbReference>
<dbReference type="GO" id="GO:0006412">
    <property type="term" value="P:translation"/>
    <property type="evidence" value="ECO:0007669"/>
    <property type="project" value="UniProtKB-UniRule"/>
</dbReference>
<dbReference type="FunFam" id="3.30.1440.10:FF:000001">
    <property type="entry name" value="50S ribosomal protein L5"/>
    <property type="match status" value="1"/>
</dbReference>
<dbReference type="Gene3D" id="3.30.1440.10">
    <property type="match status" value="1"/>
</dbReference>
<dbReference type="HAMAP" id="MF_01333_B">
    <property type="entry name" value="Ribosomal_uL5_B"/>
    <property type="match status" value="1"/>
</dbReference>
<dbReference type="InterPro" id="IPR002132">
    <property type="entry name" value="Ribosomal_uL5"/>
</dbReference>
<dbReference type="InterPro" id="IPR020930">
    <property type="entry name" value="Ribosomal_uL5_bac-type"/>
</dbReference>
<dbReference type="InterPro" id="IPR031309">
    <property type="entry name" value="Ribosomal_uL5_C"/>
</dbReference>
<dbReference type="InterPro" id="IPR020929">
    <property type="entry name" value="Ribosomal_uL5_CS"/>
</dbReference>
<dbReference type="InterPro" id="IPR022803">
    <property type="entry name" value="Ribosomal_uL5_dom_sf"/>
</dbReference>
<dbReference type="InterPro" id="IPR031310">
    <property type="entry name" value="Ribosomal_uL5_N"/>
</dbReference>
<dbReference type="NCBIfam" id="NF000585">
    <property type="entry name" value="PRK00010.1"/>
    <property type="match status" value="1"/>
</dbReference>
<dbReference type="PANTHER" id="PTHR11994">
    <property type="entry name" value="60S RIBOSOMAL PROTEIN L11-RELATED"/>
    <property type="match status" value="1"/>
</dbReference>
<dbReference type="Pfam" id="PF00281">
    <property type="entry name" value="Ribosomal_L5"/>
    <property type="match status" value="1"/>
</dbReference>
<dbReference type="Pfam" id="PF00673">
    <property type="entry name" value="Ribosomal_L5_C"/>
    <property type="match status" value="1"/>
</dbReference>
<dbReference type="PIRSF" id="PIRSF002161">
    <property type="entry name" value="Ribosomal_L5"/>
    <property type="match status" value="1"/>
</dbReference>
<dbReference type="SUPFAM" id="SSF55282">
    <property type="entry name" value="RL5-like"/>
    <property type="match status" value="1"/>
</dbReference>
<dbReference type="PROSITE" id="PS00358">
    <property type="entry name" value="RIBOSOMAL_L5"/>
    <property type="match status" value="1"/>
</dbReference>